<proteinExistence type="inferred from homology"/>
<reference key="1">
    <citation type="journal article" date="2010" name="J. Bacteriol.">
        <title>Whole genome sequences of two Xylella fastidiosa strains (M12 and M23) causing almond leaf scorch disease in California.</title>
        <authorList>
            <person name="Chen J."/>
            <person name="Xie G."/>
            <person name="Han S."/>
            <person name="Chertkov O."/>
            <person name="Sims D."/>
            <person name="Civerolo E.L."/>
        </authorList>
    </citation>
    <scope>NUCLEOTIDE SEQUENCE [LARGE SCALE GENOMIC DNA]</scope>
    <source>
        <strain>M23</strain>
    </source>
</reference>
<feature type="chain" id="PRO_1000119970" description="Exodeoxyribonuclease 7 small subunit">
    <location>
        <begin position="1"/>
        <end position="88"/>
    </location>
</feature>
<feature type="region of interest" description="Disordered" evidence="2">
    <location>
        <begin position="69"/>
        <end position="88"/>
    </location>
</feature>
<keyword id="KW-0963">Cytoplasm</keyword>
<keyword id="KW-0269">Exonuclease</keyword>
<keyword id="KW-0378">Hydrolase</keyword>
<keyword id="KW-0540">Nuclease</keyword>
<organism>
    <name type="scientific">Xylella fastidiosa (strain M23)</name>
    <dbReference type="NCBI Taxonomy" id="405441"/>
    <lineage>
        <taxon>Bacteria</taxon>
        <taxon>Pseudomonadati</taxon>
        <taxon>Pseudomonadota</taxon>
        <taxon>Gammaproteobacteria</taxon>
        <taxon>Lysobacterales</taxon>
        <taxon>Lysobacteraceae</taxon>
        <taxon>Xylella</taxon>
    </lineage>
</organism>
<name>EX7S_XYLF2</name>
<comment type="function">
    <text evidence="1">Bidirectionally degrades single-stranded DNA into large acid-insoluble oligonucleotides, which are then degraded further into small acid-soluble oligonucleotides.</text>
</comment>
<comment type="catalytic activity">
    <reaction evidence="1">
        <text>Exonucleolytic cleavage in either 5'- to 3'- or 3'- to 5'-direction to yield nucleoside 5'-phosphates.</text>
        <dbReference type="EC" id="3.1.11.6"/>
    </reaction>
</comment>
<comment type="subunit">
    <text evidence="1">Heterooligomer composed of large and small subunits.</text>
</comment>
<comment type="subcellular location">
    <subcellularLocation>
        <location evidence="1">Cytoplasm</location>
    </subcellularLocation>
</comment>
<comment type="similarity">
    <text evidence="1">Belongs to the XseB family.</text>
</comment>
<dbReference type="EC" id="3.1.11.6" evidence="1"/>
<dbReference type="EMBL" id="CP001011">
    <property type="protein sequence ID" value="ACB93008.1"/>
    <property type="molecule type" value="Genomic_DNA"/>
</dbReference>
<dbReference type="RefSeq" id="WP_004088658.1">
    <property type="nucleotide sequence ID" value="NC_010577.1"/>
</dbReference>
<dbReference type="SMR" id="B2I7B1"/>
<dbReference type="KEGG" id="xfn:XfasM23_1600"/>
<dbReference type="HOGENOM" id="CLU_145918_3_3_6"/>
<dbReference type="Proteomes" id="UP000001698">
    <property type="component" value="Chromosome"/>
</dbReference>
<dbReference type="GO" id="GO:0005829">
    <property type="term" value="C:cytosol"/>
    <property type="evidence" value="ECO:0007669"/>
    <property type="project" value="TreeGrafter"/>
</dbReference>
<dbReference type="GO" id="GO:0009318">
    <property type="term" value="C:exodeoxyribonuclease VII complex"/>
    <property type="evidence" value="ECO:0007669"/>
    <property type="project" value="InterPro"/>
</dbReference>
<dbReference type="GO" id="GO:0008855">
    <property type="term" value="F:exodeoxyribonuclease VII activity"/>
    <property type="evidence" value="ECO:0007669"/>
    <property type="project" value="UniProtKB-UniRule"/>
</dbReference>
<dbReference type="GO" id="GO:0006308">
    <property type="term" value="P:DNA catabolic process"/>
    <property type="evidence" value="ECO:0007669"/>
    <property type="project" value="UniProtKB-UniRule"/>
</dbReference>
<dbReference type="Gene3D" id="1.10.287.1040">
    <property type="entry name" value="Exonuclease VII, small subunit"/>
    <property type="match status" value="1"/>
</dbReference>
<dbReference type="HAMAP" id="MF_00337">
    <property type="entry name" value="Exonuc_7_S"/>
    <property type="match status" value="1"/>
</dbReference>
<dbReference type="InterPro" id="IPR003761">
    <property type="entry name" value="Exonuc_VII_S"/>
</dbReference>
<dbReference type="InterPro" id="IPR037004">
    <property type="entry name" value="Exonuc_VII_ssu_sf"/>
</dbReference>
<dbReference type="NCBIfam" id="NF002140">
    <property type="entry name" value="PRK00977.1-4"/>
    <property type="match status" value="1"/>
</dbReference>
<dbReference type="NCBIfam" id="TIGR01280">
    <property type="entry name" value="xseB"/>
    <property type="match status" value="1"/>
</dbReference>
<dbReference type="PANTHER" id="PTHR34137">
    <property type="entry name" value="EXODEOXYRIBONUCLEASE 7 SMALL SUBUNIT"/>
    <property type="match status" value="1"/>
</dbReference>
<dbReference type="PANTHER" id="PTHR34137:SF1">
    <property type="entry name" value="EXODEOXYRIBONUCLEASE 7 SMALL SUBUNIT"/>
    <property type="match status" value="1"/>
</dbReference>
<dbReference type="Pfam" id="PF02609">
    <property type="entry name" value="Exonuc_VII_S"/>
    <property type="match status" value="1"/>
</dbReference>
<dbReference type="PIRSF" id="PIRSF006488">
    <property type="entry name" value="Exonuc_VII_S"/>
    <property type="match status" value="1"/>
</dbReference>
<dbReference type="SUPFAM" id="SSF116842">
    <property type="entry name" value="XseB-like"/>
    <property type="match status" value="1"/>
</dbReference>
<sequence length="88" mass="9866">MPKRSPPDTSPVARFEQSLQELEQLVQNMETGALSLEQSLGAYERGIALYRECHQALEQAQLRVRILSDPMHPDDGEPFDPSLVSTSQ</sequence>
<accession>B2I7B1</accession>
<protein>
    <recommendedName>
        <fullName evidence="1">Exodeoxyribonuclease 7 small subunit</fullName>
        <ecNumber evidence="1">3.1.11.6</ecNumber>
    </recommendedName>
    <alternativeName>
        <fullName evidence="1">Exodeoxyribonuclease VII small subunit</fullName>
        <shortName evidence="1">Exonuclease VII small subunit</shortName>
    </alternativeName>
</protein>
<evidence type="ECO:0000255" key="1">
    <source>
        <dbReference type="HAMAP-Rule" id="MF_00337"/>
    </source>
</evidence>
<evidence type="ECO:0000256" key="2">
    <source>
        <dbReference type="SAM" id="MobiDB-lite"/>
    </source>
</evidence>
<gene>
    <name evidence="1" type="primary">xseB</name>
    <name type="ordered locus">XfasM23_1600</name>
</gene>